<protein>
    <recommendedName>
        <fullName>Histone H3, embryonic</fullName>
    </recommendedName>
</protein>
<dbReference type="EMBL" id="X07505">
    <property type="protein sequence ID" value="CAA30388.1"/>
    <property type="molecule type" value="Genomic_DNA"/>
</dbReference>
<dbReference type="PIR" id="S01198">
    <property type="entry name" value="S01198"/>
</dbReference>
<dbReference type="SMR" id="P69071"/>
<dbReference type="GO" id="GO:0000786">
    <property type="term" value="C:nucleosome"/>
    <property type="evidence" value="ECO:0007669"/>
    <property type="project" value="UniProtKB-KW"/>
</dbReference>
<dbReference type="GO" id="GO:0005634">
    <property type="term" value="C:nucleus"/>
    <property type="evidence" value="ECO:0007669"/>
    <property type="project" value="UniProtKB-SubCell"/>
</dbReference>
<dbReference type="GO" id="GO:0003677">
    <property type="term" value="F:DNA binding"/>
    <property type="evidence" value="ECO:0007669"/>
    <property type="project" value="UniProtKB-KW"/>
</dbReference>
<dbReference type="GO" id="GO:0046982">
    <property type="term" value="F:protein heterodimerization activity"/>
    <property type="evidence" value="ECO:0007669"/>
    <property type="project" value="InterPro"/>
</dbReference>
<dbReference type="GO" id="GO:0030527">
    <property type="term" value="F:structural constituent of chromatin"/>
    <property type="evidence" value="ECO:0007669"/>
    <property type="project" value="InterPro"/>
</dbReference>
<dbReference type="CDD" id="cd22911">
    <property type="entry name" value="HFD_H3"/>
    <property type="match status" value="1"/>
</dbReference>
<dbReference type="FunFam" id="1.10.20.10:FF:000078">
    <property type="entry name" value="Histone H3"/>
    <property type="match status" value="1"/>
</dbReference>
<dbReference type="FunFam" id="1.10.20.10:FF:000044">
    <property type="entry name" value="Histone H3.3"/>
    <property type="match status" value="1"/>
</dbReference>
<dbReference type="Gene3D" id="1.10.20.10">
    <property type="entry name" value="Histone, subunit A"/>
    <property type="match status" value="1"/>
</dbReference>
<dbReference type="InterPro" id="IPR009072">
    <property type="entry name" value="Histone-fold"/>
</dbReference>
<dbReference type="InterPro" id="IPR007125">
    <property type="entry name" value="Histone_H2A/H2B/H3"/>
</dbReference>
<dbReference type="InterPro" id="IPR000164">
    <property type="entry name" value="Histone_H3/CENP-A"/>
</dbReference>
<dbReference type="PANTHER" id="PTHR11426">
    <property type="entry name" value="HISTONE H3"/>
    <property type="match status" value="1"/>
</dbReference>
<dbReference type="Pfam" id="PF00125">
    <property type="entry name" value="Histone"/>
    <property type="match status" value="1"/>
</dbReference>
<dbReference type="PRINTS" id="PR00622">
    <property type="entry name" value="HISTONEH3"/>
</dbReference>
<dbReference type="SMART" id="SM00428">
    <property type="entry name" value="H3"/>
    <property type="match status" value="1"/>
</dbReference>
<dbReference type="SUPFAM" id="SSF47113">
    <property type="entry name" value="Histone-fold"/>
    <property type="match status" value="1"/>
</dbReference>
<dbReference type="PROSITE" id="PS00322">
    <property type="entry name" value="HISTONE_H3_1"/>
    <property type="match status" value="1"/>
</dbReference>
<dbReference type="PROSITE" id="PS00959">
    <property type="entry name" value="HISTONE_H3_2"/>
    <property type="match status" value="1"/>
</dbReference>
<organism>
    <name type="scientific">Dermasterias imbricata</name>
    <name type="common">Leather sea star</name>
    <name type="synonym">Asteropsis imbricata</name>
    <dbReference type="NCBI Taxonomy" id="7590"/>
    <lineage>
        <taxon>Eukaryota</taxon>
        <taxon>Metazoa</taxon>
        <taxon>Echinodermata</taxon>
        <taxon>Eleutherozoa</taxon>
        <taxon>Asterozoa</taxon>
        <taxon>Asteroidea</taxon>
        <taxon>Valvatacea</taxon>
        <taxon>Valvatida</taxon>
        <taxon>Poraniidae</taxon>
        <taxon>Dermasterias</taxon>
    </lineage>
</organism>
<feature type="initiator methionine" description="Removed" evidence="1">
    <location>
        <position position="1"/>
    </location>
</feature>
<feature type="chain" id="PRO_0000221311" description="Histone H3, embryonic">
    <location>
        <begin position="2"/>
        <end position="136"/>
    </location>
</feature>
<feature type="region of interest" description="Disordered" evidence="2">
    <location>
        <begin position="1"/>
        <end position="43"/>
    </location>
</feature>
<feature type="modified residue" description="N6-methylated lysine" evidence="1">
    <location>
        <position position="5"/>
    </location>
</feature>
<feature type="modified residue" description="N6-acetyllysine; alternate" evidence="1">
    <location>
        <position position="10"/>
    </location>
</feature>
<feature type="modified residue" description="N6-methylated lysine; alternate" evidence="1">
    <location>
        <position position="10"/>
    </location>
</feature>
<feature type="modified residue" description="Phosphoserine" evidence="1">
    <location>
        <position position="11"/>
    </location>
</feature>
<feature type="modified residue" description="N6-acetyllysine" evidence="1">
    <location>
        <position position="15"/>
    </location>
</feature>
<feature type="modified residue" description="N6-acetyllysine" evidence="1">
    <location>
        <position position="24"/>
    </location>
</feature>
<feature type="modified residue" description="N6-methylated lysine" evidence="1">
    <location>
        <position position="28"/>
    </location>
</feature>
<feature type="modified residue" description="N6-methylated lysine" evidence="1">
    <location>
        <position position="37"/>
    </location>
</feature>
<feature type="modified residue" description="N6-methylated lysine" evidence="1">
    <location>
        <position position="80"/>
    </location>
</feature>
<evidence type="ECO:0000250" key="1"/>
<evidence type="ECO:0000256" key="2">
    <source>
        <dbReference type="SAM" id="MobiDB-lite"/>
    </source>
</evidence>
<evidence type="ECO:0000305" key="3"/>
<name>H3_DERIM</name>
<comment type="function">
    <text>Core component of nucleosome. Nucleosomes wrap and compact DNA into chromatin, limiting DNA accessibility to the cellular machineries which require DNA as a template. Histones thereby play a central role in transcription regulation, DNA repair, DNA replication and chromosomal stability. DNA accessibility is regulated via a complex set of post-translational modifications of histones, also called histone code, and nucleosome remodeling.</text>
</comment>
<comment type="subunit">
    <text>The nucleosome is a histone octamer containing two molecules each of H2A, H2B, H3 and H4 assembled in one H3-H4 heterotetramer and two H2A-H2B heterodimers. The octamer wraps approximately 147 bp of DNA.</text>
</comment>
<comment type="subcellular location">
    <subcellularLocation>
        <location evidence="1">Nucleus</location>
    </subcellularLocation>
    <subcellularLocation>
        <location evidence="1">Chromosome</location>
    </subcellularLocation>
</comment>
<comment type="developmental stage">
    <text>This histone is expressed during late embryonic development.</text>
</comment>
<comment type="PTM">
    <text evidence="1">Acetylation is generally linked to gene activation.</text>
</comment>
<comment type="PTM">
    <text evidence="1">Methylation at Lys-5 is linked to gene activation. Methylation at Lys-10 is linked to gene repression (By similarity).</text>
</comment>
<comment type="similarity">
    <text evidence="3">Belongs to the histone H3 family.</text>
</comment>
<reference key="1">
    <citation type="journal article" date="1988" name="J. Mol. Evol.">
        <title>Histone genes in three sea star species: cluster arrangement, transcriptional polarity, and analyses of the flanking regions of H3 and H4 genes.</title>
        <authorList>
            <person name="Banfield D.C.D."/>
            <person name="Honda B.M."/>
            <person name="Smith M.J."/>
        </authorList>
    </citation>
    <scope>NUCLEOTIDE SEQUENCE [GENOMIC DNA]</scope>
    <source>
        <tissue>Sperm</tissue>
    </source>
</reference>
<accession>P69071</accession>
<accession>P02298</accession>
<accession>P05320</accession>
<accession>P05321</accession>
<accession>P05322</accession>
<sequence length="136" mass="15402">MARTKQTARKSTGGKAPRKQLATKAARKSAPATGGVKKPHRYRPGTVALREIRRYQKSTELLIRKLPFQRLVREIAQDFKTELRFQSSAVMALQEASEAYLVGLFEDTNLCAIHAKRVTIMPKDIQLARRIRGERA</sequence>
<keyword id="KW-0007">Acetylation</keyword>
<keyword id="KW-0158">Chromosome</keyword>
<keyword id="KW-0238">DNA-binding</keyword>
<keyword id="KW-0488">Methylation</keyword>
<keyword id="KW-0544">Nucleosome core</keyword>
<keyword id="KW-0539">Nucleus</keyword>
<keyword id="KW-0597">Phosphoprotein</keyword>
<proteinExistence type="evidence at transcript level"/>